<sequence length="38" mass="4748">NFLEMLKENCKLLWKRQKQKFRIPMPESLCQILKKKKQ</sequence>
<keyword id="KW-0027">Amidation</keyword>
<keyword id="KW-0903">Direct protein sequencing</keyword>
<keyword id="KW-0964">Secreted</keyword>
<keyword id="KW-0800">Toxin</keyword>
<organism>
    <name type="scientific">Cupiennius salei</name>
    <name type="common">American wandering spider</name>
    <dbReference type="NCBI Taxonomy" id="6928"/>
    <lineage>
        <taxon>Eukaryota</taxon>
        <taxon>Metazoa</taxon>
        <taxon>Ecdysozoa</taxon>
        <taxon>Arthropoda</taxon>
        <taxon>Chelicerata</taxon>
        <taxon>Arachnida</taxon>
        <taxon>Araneae</taxon>
        <taxon>Araneomorphae</taxon>
        <taxon>Entelegynae</taxon>
        <taxon>Lycosoidea</taxon>
        <taxon>Ctenidae</taxon>
        <taxon>Cupiennius</taxon>
    </lineage>
</organism>
<accession>B3EWS9</accession>
<evidence type="ECO:0000269" key="1">
    <source>
    </source>
</evidence>
<evidence type="ECO:0000303" key="2">
    <source>
    </source>
</evidence>
<evidence type="ECO:0000305" key="3">
    <source>
    </source>
</evidence>
<feature type="peptide" id="PRO_0000421187" description="CSTX-16 A chain" evidence="1">
    <location>
        <begin position="1"/>
        <end position="19"/>
    </location>
</feature>
<feature type="peptide" id="PRO_0000421188" description="CSTX-16 B chain" evidence="1">
    <location>
        <begin position="20"/>
        <end position="38"/>
    </location>
</feature>
<feature type="modified residue" description="Glutamine amide" evidence="1">
    <location>
        <position position="19"/>
    </location>
</feature>
<feature type="modified residue" description="Glutamine amide" evidence="1">
    <location>
        <position position="38"/>
    </location>
</feature>
<feature type="non-consecutive residues" evidence="2">
    <location>
        <begin position="19"/>
        <end position="20"/>
    </location>
</feature>
<comment type="subcellular location">
    <subcellularLocation>
        <location evidence="1">Secreted</location>
    </subcellularLocation>
</comment>
<comment type="tissue specificity">
    <text evidence="3">Expressed by the venom gland.</text>
</comment>
<comment type="mass spectrometry" mass="2370.371" method="Electrospray" evidence="1">
    <molecule>CSTX-16 A chain</molecule>
</comment>
<comment type="mass spectrometry" mass="2504.347" method="Electrospray" evidence="1">
    <molecule>CSTX-16 B chain</molecule>
</comment>
<comment type="similarity">
    <text>Belongs to the cationic peptide 04 (cupiennin) family. 10 (double chain) subfamily.</text>
</comment>
<protein>
    <recommendedName>
        <fullName evidence="2">Toxin CSTX-16</fullName>
    </recommendedName>
    <component>
        <recommendedName>
            <fullName evidence="2">CSTX-16 A chain</fullName>
        </recommendedName>
    </component>
    <component>
        <recommendedName>
            <fullName evidence="2">CSTX-16 B chain</fullName>
        </recommendedName>
    </component>
</protein>
<reference key="1">
    <citation type="journal article" date="2012" name="FEBS J.">
        <title>Multicomponent venom of the spider Cupiennius salei: a bioanalytical investigation applying different strategies.</title>
        <authorList>
            <person name="Trachsel C."/>
            <person name="Siegemund D."/>
            <person name="Kampfer U."/>
            <person name="Kopp L.S."/>
            <person name="Buhr C."/>
            <person name="Grossmann J."/>
            <person name="Luthi C."/>
            <person name="Cunningham M."/>
            <person name="Nentwig W."/>
            <person name="Kuhn-Nentwig L."/>
            <person name="Schurch S."/>
            <person name="Schaller J."/>
        </authorList>
    </citation>
    <scope>PROTEIN SEQUENCE</scope>
    <scope>MASS SPECTROMETRY</scope>
    <scope>AMIDATION AT GLN-19 AND GLN-38</scope>
    <source>
        <tissue>Venom</tissue>
    </source>
</reference>
<proteinExistence type="evidence at protein level"/>
<dbReference type="SMR" id="B3EWS9"/>
<dbReference type="GO" id="GO:0005576">
    <property type="term" value="C:extracellular region"/>
    <property type="evidence" value="ECO:0007669"/>
    <property type="project" value="UniProtKB-SubCell"/>
</dbReference>
<dbReference type="GO" id="GO:0090729">
    <property type="term" value="F:toxin activity"/>
    <property type="evidence" value="ECO:0007669"/>
    <property type="project" value="UniProtKB-KW"/>
</dbReference>
<name>TXC16_CUPSA</name>